<organism>
    <name type="scientific">Arabidopsis thaliana</name>
    <name type="common">Mouse-ear cress</name>
    <dbReference type="NCBI Taxonomy" id="3702"/>
    <lineage>
        <taxon>Eukaryota</taxon>
        <taxon>Viridiplantae</taxon>
        <taxon>Streptophyta</taxon>
        <taxon>Embryophyta</taxon>
        <taxon>Tracheophyta</taxon>
        <taxon>Spermatophyta</taxon>
        <taxon>Magnoliopsida</taxon>
        <taxon>eudicotyledons</taxon>
        <taxon>Gunneridae</taxon>
        <taxon>Pentapetalae</taxon>
        <taxon>rosids</taxon>
        <taxon>malvids</taxon>
        <taxon>Brassicales</taxon>
        <taxon>Brassicaceae</taxon>
        <taxon>Camelineae</taxon>
        <taxon>Arabidopsis</taxon>
    </lineage>
</organism>
<proteinExistence type="evidence at protein level"/>
<gene>
    <name evidence="10" type="primary">RAD5A</name>
    <name evidence="11" type="synonym">RAD5</name>
    <name type="ordered locus">At5g22750</name>
    <name type="ORF">MDJ22.17</name>
</gene>
<dbReference type="EC" id="3.6.4.-" evidence="11"/>
<dbReference type="EMBL" id="AB006699">
    <property type="protein sequence ID" value="BAB11681.1"/>
    <property type="molecule type" value="Genomic_DNA"/>
</dbReference>
<dbReference type="EMBL" id="CP002688">
    <property type="protein sequence ID" value="AED93070.1"/>
    <property type="molecule type" value="Genomic_DNA"/>
</dbReference>
<dbReference type="EMBL" id="AK228695">
    <property type="protein sequence ID" value="BAF00599.1"/>
    <property type="molecule type" value="mRNA"/>
</dbReference>
<dbReference type="RefSeq" id="NP_197667.1">
    <property type="nucleotide sequence ID" value="NM_122181.3"/>
</dbReference>
<dbReference type="SMR" id="Q9FNI6"/>
<dbReference type="BioGRID" id="17613">
    <property type="interactions" value="5"/>
</dbReference>
<dbReference type="FunCoup" id="Q9FNI6">
    <property type="interactions" value="1135"/>
</dbReference>
<dbReference type="STRING" id="3702.Q9FNI6"/>
<dbReference type="GlyGen" id="Q9FNI6">
    <property type="glycosylation" value="1 site"/>
</dbReference>
<dbReference type="iPTMnet" id="Q9FNI6"/>
<dbReference type="PaxDb" id="3702-AT5G22750.1"/>
<dbReference type="ProteomicsDB" id="232563"/>
<dbReference type="EnsemblPlants" id="AT5G22750.1">
    <property type="protein sequence ID" value="AT5G22750.1"/>
    <property type="gene ID" value="AT5G22750"/>
</dbReference>
<dbReference type="GeneID" id="832338"/>
<dbReference type="Gramene" id="AT5G22750.1">
    <property type="protein sequence ID" value="AT5G22750.1"/>
    <property type="gene ID" value="AT5G22750"/>
</dbReference>
<dbReference type="KEGG" id="ath:AT5G22750"/>
<dbReference type="Araport" id="AT5G22750"/>
<dbReference type="TAIR" id="AT5G22750">
    <property type="gene designation" value="RAD5"/>
</dbReference>
<dbReference type="eggNOG" id="KOG1001">
    <property type="taxonomic scope" value="Eukaryota"/>
</dbReference>
<dbReference type="HOGENOM" id="CLU_000315_2_5_1"/>
<dbReference type="InParanoid" id="Q9FNI6"/>
<dbReference type="OMA" id="KVEPWSN"/>
<dbReference type="PhylomeDB" id="Q9FNI6"/>
<dbReference type="PRO" id="PR:Q9FNI6"/>
<dbReference type="Proteomes" id="UP000006548">
    <property type="component" value="Chromosome 5"/>
</dbReference>
<dbReference type="ExpressionAtlas" id="Q9FNI6">
    <property type="expression patterns" value="baseline and differential"/>
</dbReference>
<dbReference type="GO" id="GO:0005634">
    <property type="term" value="C:nucleus"/>
    <property type="evidence" value="ECO:0007669"/>
    <property type="project" value="UniProtKB-SubCell"/>
</dbReference>
<dbReference type="GO" id="GO:0005524">
    <property type="term" value="F:ATP binding"/>
    <property type="evidence" value="ECO:0007669"/>
    <property type="project" value="UniProtKB-KW"/>
</dbReference>
<dbReference type="GO" id="GO:0004386">
    <property type="term" value="F:helicase activity"/>
    <property type="evidence" value="ECO:0007669"/>
    <property type="project" value="UniProtKB-KW"/>
</dbReference>
<dbReference type="GO" id="GO:0016818">
    <property type="term" value="F:hydrolase activity, acting on acid anhydrides, in phosphorus-containing anhydrides"/>
    <property type="evidence" value="ECO:0007669"/>
    <property type="project" value="InterPro"/>
</dbReference>
<dbReference type="GO" id="GO:0003676">
    <property type="term" value="F:nucleic acid binding"/>
    <property type="evidence" value="ECO:0007669"/>
    <property type="project" value="InterPro"/>
</dbReference>
<dbReference type="GO" id="GO:0008270">
    <property type="term" value="F:zinc ion binding"/>
    <property type="evidence" value="ECO:0007669"/>
    <property type="project" value="UniProtKB-KW"/>
</dbReference>
<dbReference type="GO" id="GO:0006325">
    <property type="term" value="P:chromatin organization"/>
    <property type="evidence" value="ECO:0007669"/>
    <property type="project" value="UniProtKB-KW"/>
</dbReference>
<dbReference type="GO" id="GO:0009294">
    <property type="term" value="P:DNA-mediated transformation"/>
    <property type="evidence" value="ECO:0000315"/>
    <property type="project" value="TAIR"/>
</dbReference>
<dbReference type="GO" id="GO:0000724">
    <property type="term" value="P:double-strand break repair via homologous recombination"/>
    <property type="evidence" value="ECO:0000314"/>
    <property type="project" value="TAIR"/>
</dbReference>
<dbReference type="GO" id="GO:0045003">
    <property type="term" value="P:double-strand break repair via synthesis-dependent strand annealing"/>
    <property type="evidence" value="ECO:0000314"/>
    <property type="project" value="TAIR"/>
</dbReference>
<dbReference type="GO" id="GO:0036297">
    <property type="term" value="P:interstrand cross-link repair"/>
    <property type="evidence" value="ECO:0000316"/>
    <property type="project" value="TAIR"/>
</dbReference>
<dbReference type="CDD" id="cd18008">
    <property type="entry name" value="DEXDc_SHPRH-like"/>
    <property type="match status" value="1"/>
</dbReference>
<dbReference type="CDD" id="cd18793">
    <property type="entry name" value="SF2_C_SNF"/>
    <property type="match status" value="1"/>
</dbReference>
<dbReference type="FunFam" id="3.40.50.10810:FF:000089">
    <property type="entry name" value="DNA repair protein RAD5B"/>
    <property type="match status" value="1"/>
</dbReference>
<dbReference type="Gene3D" id="3.40.50.300">
    <property type="entry name" value="P-loop containing nucleotide triphosphate hydrolases"/>
    <property type="match status" value="1"/>
</dbReference>
<dbReference type="Gene3D" id="3.40.50.10810">
    <property type="entry name" value="Tandem AAA-ATPase domain"/>
    <property type="match status" value="2"/>
</dbReference>
<dbReference type="Gene3D" id="3.30.40.10">
    <property type="entry name" value="Zinc/RING finger domain, C3HC4 (zinc finger)"/>
    <property type="match status" value="1"/>
</dbReference>
<dbReference type="InterPro" id="IPR014001">
    <property type="entry name" value="Helicase_ATP-bd"/>
</dbReference>
<dbReference type="InterPro" id="IPR001650">
    <property type="entry name" value="Helicase_C-like"/>
</dbReference>
<dbReference type="InterPro" id="IPR014905">
    <property type="entry name" value="HIRAN"/>
</dbReference>
<dbReference type="InterPro" id="IPR027417">
    <property type="entry name" value="P-loop_NTPase"/>
</dbReference>
<dbReference type="InterPro" id="IPR038718">
    <property type="entry name" value="SNF2-like_sf"/>
</dbReference>
<dbReference type="InterPro" id="IPR049730">
    <property type="entry name" value="SNF2/RAD54-like_C"/>
</dbReference>
<dbReference type="InterPro" id="IPR000330">
    <property type="entry name" value="SNF2_N"/>
</dbReference>
<dbReference type="InterPro" id="IPR050628">
    <property type="entry name" value="SNF2_RAD54_helicase_TF"/>
</dbReference>
<dbReference type="InterPro" id="IPR056450">
    <property type="entry name" value="UBA_RAD5A"/>
</dbReference>
<dbReference type="InterPro" id="IPR001841">
    <property type="entry name" value="Znf_RING"/>
</dbReference>
<dbReference type="InterPro" id="IPR013083">
    <property type="entry name" value="Znf_RING/FYVE/PHD"/>
</dbReference>
<dbReference type="InterPro" id="IPR017907">
    <property type="entry name" value="Znf_RING_CS"/>
</dbReference>
<dbReference type="PANTHER" id="PTHR45626:SF45">
    <property type="entry name" value="DNA REPAIR PROTEIN RAD5A"/>
    <property type="match status" value="1"/>
</dbReference>
<dbReference type="PANTHER" id="PTHR45626">
    <property type="entry name" value="TRANSCRIPTION TERMINATION FACTOR 2-RELATED"/>
    <property type="match status" value="1"/>
</dbReference>
<dbReference type="Pfam" id="PF00271">
    <property type="entry name" value="Helicase_C"/>
    <property type="match status" value="1"/>
</dbReference>
<dbReference type="Pfam" id="PF08797">
    <property type="entry name" value="HIRAN"/>
    <property type="match status" value="1"/>
</dbReference>
<dbReference type="Pfam" id="PF00176">
    <property type="entry name" value="SNF2-rel_dom"/>
    <property type="match status" value="1"/>
</dbReference>
<dbReference type="Pfam" id="PF24559">
    <property type="entry name" value="UBA_RAD5A"/>
    <property type="match status" value="1"/>
</dbReference>
<dbReference type="Pfam" id="PF13920">
    <property type="entry name" value="zf-C3HC4_3"/>
    <property type="match status" value="1"/>
</dbReference>
<dbReference type="SMART" id="SM00487">
    <property type="entry name" value="DEXDc"/>
    <property type="match status" value="1"/>
</dbReference>
<dbReference type="SMART" id="SM00490">
    <property type="entry name" value="HELICc"/>
    <property type="match status" value="1"/>
</dbReference>
<dbReference type="SMART" id="SM00910">
    <property type="entry name" value="HIRAN"/>
    <property type="match status" value="1"/>
</dbReference>
<dbReference type="SMART" id="SM00184">
    <property type="entry name" value="RING"/>
    <property type="match status" value="1"/>
</dbReference>
<dbReference type="SUPFAM" id="SSF52540">
    <property type="entry name" value="P-loop containing nucleoside triphosphate hydrolases"/>
    <property type="match status" value="2"/>
</dbReference>
<dbReference type="SUPFAM" id="SSF57850">
    <property type="entry name" value="RING/U-box"/>
    <property type="match status" value="1"/>
</dbReference>
<dbReference type="PROSITE" id="PS51192">
    <property type="entry name" value="HELICASE_ATP_BIND_1"/>
    <property type="match status" value="1"/>
</dbReference>
<dbReference type="PROSITE" id="PS51194">
    <property type="entry name" value="HELICASE_CTER"/>
    <property type="match status" value="1"/>
</dbReference>
<dbReference type="PROSITE" id="PS00518">
    <property type="entry name" value="ZF_RING_1"/>
    <property type="match status" value="1"/>
</dbReference>
<dbReference type="PROSITE" id="PS50089">
    <property type="entry name" value="ZF_RING_2"/>
    <property type="match status" value="1"/>
</dbReference>
<evidence type="ECO:0000250" key="1"/>
<evidence type="ECO:0000255" key="2">
    <source>
        <dbReference type="PROSITE-ProRule" id="PRU00175"/>
    </source>
</evidence>
<evidence type="ECO:0000255" key="3">
    <source>
        <dbReference type="PROSITE-ProRule" id="PRU00541"/>
    </source>
</evidence>
<evidence type="ECO:0000255" key="4">
    <source>
        <dbReference type="PROSITE-ProRule" id="PRU00542"/>
    </source>
</evidence>
<evidence type="ECO:0000256" key="5">
    <source>
        <dbReference type="SAM" id="MobiDB-lite"/>
    </source>
</evidence>
<evidence type="ECO:0000269" key="6">
    <source>
    </source>
</evidence>
<evidence type="ECO:0000269" key="7">
    <source>
    </source>
</evidence>
<evidence type="ECO:0000269" key="8">
    <source>
    </source>
</evidence>
<evidence type="ECO:0000269" key="9">
    <source>
    </source>
</evidence>
<evidence type="ECO:0000303" key="10">
    <source>
    </source>
</evidence>
<evidence type="ECO:0000305" key="11"/>
<accession>Q9FNI6</accession>
<accession>Q0WQK0</accession>
<comment type="function">
    <text evidence="6 7 8 9">Functions in error-free postreplication DNA repair or DNA-damage tolerance (DTT) pathway (PubMed:18310306, PubMed:21549648). Required for homologous recombination (HR) induced by DNA double-strand break (DSB) in somatic cells (PubMed:18310306). Required for damage-induced DNA repair, independently of MUS81 and RECQL4A. Plays a role in synthesis-dependent strand annealing (SDSA) but not in single-strand annealing (SSA) (PubMed:20971895). Possesses double-stranded DNA-dependent ATPase activity. Is able to regress replication forks with preference for forks with a leading strand gap. Is able to catalyze branch migration of Holliday junctions and is unaffected by protein blockades (PubMed:27458713).</text>
</comment>
<comment type="subcellular location">
    <subcellularLocation>
        <location evidence="1">Nucleus</location>
    </subcellularLocation>
</comment>
<comment type="similarity">
    <text evidence="11">Belongs to the SNF2/RAD54 helicase family. RAD16 subfamily.</text>
</comment>
<name>SM3L2_ARATH</name>
<reference key="1">
    <citation type="journal article" date="1997" name="DNA Res.">
        <title>Structural analysis of Arabidopsis thaliana chromosome 5. II. Sequence features of the regions of 1,044,062 bp covered by thirteen physically assigned P1 clones.</title>
        <authorList>
            <person name="Kotani H."/>
            <person name="Nakamura Y."/>
            <person name="Sato S."/>
            <person name="Kaneko T."/>
            <person name="Asamizu E."/>
            <person name="Miyajima N."/>
            <person name="Tabata S."/>
        </authorList>
    </citation>
    <scope>NUCLEOTIDE SEQUENCE [LARGE SCALE GENOMIC DNA]</scope>
    <source>
        <strain>cv. Columbia</strain>
    </source>
</reference>
<reference key="2">
    <citation type="journal article" date="2017" name="Plant J.">
        <title>Araport11: a complete reannotation of the Arabidopsis thaliana reference genome.</title>
        <authorList>
            <person name="Cheng C.Y."/>
            <person name="Krishnakumar V."/>
            <person name="Chan A.P."/>
            <person name="Thibaud-Nissen F."/>
            <person name="Schobel S."/>
            <person name="Town C.D."/>
        </authorList>
    </citation>
    <scope>GENOME REANNOTATION</scope>
    <source>
        <strain>cv. Columbia</strain>
    </source>
</reference>
<reference key="3">
    <citation type="submission" date="2006-07" db="EMBL/GenBank/DDBJ databases">
        <title>Large-scale analysis of RIKEN Arabidopsis full-length (RAFL) cDNAs.</title>
        <authorList>
            <person name="Totoki Y."/>
            <person name="Seki M."/>
            <person name="Ishida J."/>
            <person name="Nakajima M."/>
            <person name="Enju A."/>
            <person name="Kamiya A."/>
            <person name="Narusaka M."/>
            <person name="Shin-i T."/>
            <person name="Nakagawa M."/>
            <person name="Sakamoto N."/>
            <person name="Oishi K."/>
            <person name="Kohara Y."/>
            <person name="Kobayashi M."/>
            <person name="Toyoda A."/>
            <person name="Sakaki Y."/>
            <person name="Sakurai T."/>
            <person name="Iida K."/>
            <person name="Akiyama K."/>
            <person name="Satou M."/>
            <person name="Toyoda T."/>
            <person name="Konagaya A."/>
            <person name="Carninci P."/>
            <person name="Kawai J."/>
            <person name="Hayashizaki Y."/>
            <person name="Shinozaki K."/>
        </authorList>
    </citation>
    <scope>NUCLEOTIDE SEQUENCE [LARGE SCALE MRNA]</scope>
    <source>
        <strain>cv. Columbia</strain>
    </source>
</reference>
<reference key="4">
    <citation type="journal article" date="2013" name="PLoS ONE">
        <title>Genome-wide comparative in silico analysis of the RNA helicase gene family in Zea mays and Glycine max: a comparison with Arabidopsis and Oryza sativa.</title>
        <authorList>
            <person name="Xu R."/>
            <person name="Zhang S."/>
            <person name="Huang J."/>
            <person name="Zheng C."/>
        </authorList>
    </citation>
    <scope>GENE FAMILY</scope>
</reference>
<reference key="5">
    <citation type="journal article" date="2008" name="Plant Physiol.">
        <title>A homolog of ScRAD5 is involved in DNA repair and homologous recombination in Arabidopsis.</title>
        <authorList>
            <person name="Chen I.P."/>
            <person name="Mannuss A."/>
            <person name="Orel N."/>
            <person name="Heitzeberg F."/>
            <person name="Puchta H."/>
        </authorList>
    </citation>
    <scope>FUNCTION</scope>
</reference>
<reference key="6">
    <citation type="journal article" date="2010" name="Plant Cell">
        <title>RAD5A, RECQ4A, and MUS81 have specific functions in homologous recombination and define different pathways of DNA repair in Arabidopsis thaliana.</title>
        <authorList>
            <person name="Mannuss A."/>
            <person name="Dukowic-Schulze S."/>
            <person name="Suer S."/>
            <person name="Hartung F."/>
            <person name="Pacher M."/>
            <person name="Puchta H."/>
        </authorList>
    </citation>
    <scope>FUNCTION</scope>
</reference>
<reference key="7">
    <citation type="journal article" date="2011" name="DNA Repair">
        <title>RAD5a and REV3 function in two alternative pathways of DNA-damage tolerance in Arabidopsis.</title>
        <authorList>
            <person name="Wang S."/>
            <person name="Wen R."/>
            <person name="Shi X."/>
            <person name="Lambrecht A."/>
            <person name="Wang H."/>
            <person name="Xiao W."/>
        </authorList>
    </citation>
    <scope>FUNCTION</scope>
</reference>
<reference key="8">
    <citation type="journal article" date="2016" name="Plant J.">
        <title>AtRAD5A is a DNA translocase harboring a HIRAN domain which confers binding to branched DNA structures and is required for DNA repair in vivo.</title>
        <authorList>
            <person name="Kobbe D."/>
            <person name="Kahles A."/>
            <person name="Walter M."/>
            <person name="Klemm T."/>
            <person name="Mannuss A."/>
            <person name="Knoll A."/>
            <person name="Focke M."/>
            <person name="Puchta H."/>
        </authorList>
    </citation>
    <scope>FUNCTION</scope>
    <scope>MUTAGENESIS OF 425-LYS-THR-426</scope>
</reference>
<feature type="chain" id="PRO_0000056188" description="DNA repair protein RAD5A">
    <location>
        <begin position="1"/>
        <end position="1029"/>
    </location>
</feature>
<feature type="domain" description="Helicase ATP-binding" evidence="3">
    <location>
        <begin position="406"/>
        <end position="622"/>
    </location>
</feature>
<feature type="domain" description="Helicase C-terminal" evidence="4">
    <location>
        <begin position="864"/>
        <end position="1029"/>
    </location>
</feature>
<feature type="zinc finger region" description="RING-type" evidence="2">
    <location>
        <begin position="794"/>
        <end position="834"/>
    </location>
</feature>
<feature type="region of interest" description="Disordered" evidence="5">
    <location>
        <begin position="83"/>
        <end position="104"/>
    </location>
</feature>
<feature type="short sequence motif" description="DEAH box">
    <location>
        <begin position="573"/>
        <end position="576"/>
    </location>
</feature>
<feature type="binding site" evidence="3">
    <location>
        <begin position="419"/>
        <end position="426"/>
    </location>
    <ligand>
        <name>ATP</name>
        <dbReference type="ChEBI" id="CHEBI:30616"/>
    </ligand>
</feature>
<feature type="mutagenesis site" description="Abolishes double-stranded DNA-dependent ATPase activity." evidence="9">
    <original>KT</original>
    <variation>AA</variation>
    <location>
        <begin position="425"/>
        <end position="426"/>
    </location>
</feature>
<sequence length="1029" mass="114287">MGTKVSDDLVSTVRSVVGSDYSDMDIIRALHMANHDPTAAINIIFDTPSFAKPDVATPTPSGSNGGKRVDSGLKGCTFGDSGSVGANHRVEEENESVNGGGEESVSGNEWWFVGCSELAGLSTCKGRKLKSGDELVFTFPHSKGLKPETTPGKRGFGRGRPALRGASDIVRFSTKDSGEIGRIPNEWARCLLPLVRDKKIRIEGSCKSAPEALSIMDTILLSVSVYINSSMFQKHSATSFKTASNTAEESMFHPLPNLFRLLGLIPFKKAEFTPEDFYSKKRPLSSKDGSAIPTSLLQLNKVKNMNQDANGDENEQCISDGDLDNIVGVGDSSGLKEMETPHTLLCELRPYQKQALHWMTQLEKGNCTDEAATMLHPCWEAYCLADKRELVVYLNSFTGDATIHFPSTLQMARGGILADAMGLGKTVMTISLLLAHSWKAASTGFLCPNYEGDKVISSSVDDLTSPPVKATKFLGFDKRLLEQKSVLQNGGNLIVCPMTLLGQWKTEIEMHAKPGSLSVYVHYGQSRPKDAKLLSQSDVVITTYGVLTSEFSQENSADHEGIYAVRWFRIVLDEAHTIKNSKSQISLAAAALVADRRWCLTGTPIQNNLEDLYSLLRFLRIEPWGTWAWWNKLVQKPFEEGDERGLKLVQSILKPIMLRRTKSSTDREGRPILVLPPADARVIYCELSESERDFYDALFKRSKVKFDQFVEQGKVLHNYASILELLLRLRQCCDHPFLVMSRGDTAEYSDLNKLSKRFLSGKSSGLEREGKDVPSEAFVQEVVEELRKGEQGECPICLEALEDAVLTPCAHRLCRECLLASWRNSTSGLCPVCRNTVSKQELITAPTESRFQVDVEKNWVESSKITALLEELEGLRSSGSKSILFSQWTAFLDLLQIPLSRNNFSFVRLDGTLSQQQREKVLKEFSEDGSILVLLMSLKAGGVGINLTAASNAFVMDPWWNPAVEEQAVMRIHRIGQTKEVKIRRFIVKGTVEERMEAVQARKQRMISGALTDQEVRSARIEELKMLFT</sequence>
<keyword id="KW-0067">ATP-binding</keyword>
<keyword id="KW-0156">Chromatin regulator</keyword>
<keyword id="KW-0227">DNA damage</keyword>
<keyword id="KW-0233">DNA recombination</keyword>
<keyword id="KW-0234">DNA repair</keyword>
<keyword id="KW-0347">Helicase</keyword>
<keyword id="KW-0378">Hydrolase</keyword>
<keyword id="KW-0479">Metal-binding</keyword>
<keyword id="KW-0547">Nucleotide-binding</keyword>
<keyword id="KW-0539">Nucleus</keyword>
<keyword id="KW-1185">Reference proteome</keyword>
<keyword id="KW-0862">Zinc</keyword>
<keyword id="KW-0863">Zinc-finger</keyword>
<protein>
    <recommendedName>
        <fullName evidence="11">DNA repair protein RAD5A</fullName>
        <ecNumber evidence="11">3.6.4.-</ecNumber>
    </recommendedName>
    <alternativeName>
        <fullName evidence="11">Putative SWI/SNF-related matrix-associated actin-dependent regulator of chromatin subfamily A member 3-like 2</fullName>
        <shortName evidence="11">SMARCA3-like protein 2</shortName>
    </alternativeName>
    <alternativeName>
        <fullName evidence="10">RAD5 homolog A</fullName>
        <shortName evidence="10">AtRAD5a</shortName>
    </alternativeName>
</protein>